<protein>
    <recommendedName>
        <fullName>Tumor necrosis factor ligand superfamily member 4</fullName>
    </recommendedName>
    <alternativeName>
        <fullName>Glycoprotein Gp34</fullName>
    </alternativeName>
    <alternativeName>
        <fullName>OX40 ligand</fullName>
        <shortName>OX40L</shortName>
    </alternativeName>
    <alternativeName>
        <fullName>TAX transcriptionally-activated glycoprotein 1</fullName>
    </alternativeName>
    <cdAntigenName>CD252</cdAntigenName>
</protein>
<accession>P23510</accession>
<accession>Q5JZA5</accession>
<accession>Q8IV74</accession>
<accession>Q9HCN9</accession>
<dbReference type="EMBL" id="D90224">
    <property type="protein sequence ID" value="BAA14259.1"/>
    <property type="molecule type" value="mRNA"/>
</dbReference>
<dbReference type="EMBL" id="X79929">
    <property type="protein sequence ID" value="CAA56284.1"/>
    <property type="molecule type" value="mRNA"/>
</dbReference>
<dbReference type="EMBL" id="AK297932">
    <property type="protein sequence ID" value="BAG60249.1"/>
    <property type="molecule type" value="mRNA"/>
</dbReference>
<dbReference type="EMBL" id="AL022310">
    <property type="status" value="NOT_ANNOTATED_CDS"/>
    <property type="molecule type" value="Genomic_DNA"/>
</dbReference>
<dbReference type="EMBL" id="CH471067">
    <property type="protein sequence ID" value="EAW90938.1"/>
    <property type="molecule type" value="Genomic_DNA"/>
</dbReference>
<dbReference type="EMBL" id="BC041663">
    <property type="protein sequence ID" value="AAH41663.1"/>
    <property type="molecule type" value="mRNA"/>
</dbReference>
<dbReference type="EMBL" id="AB042988">
    <property type="protein sequence ID" value="BAB18304.1"/>
    <property type="molecule type" value="Genomic_DNA"/>
</dbReference>
<dbReference type="CCDS" id="CCDS1306.1">
    <molecule id="P23510-1"/>
</dbReference>
<dbReference type="CCDS" id="CCDS72985.1">
    <molecule id="P23510-2"/>
</dbReference>
<dbReference type="PIR" id="A39680">
    <property type="entry name" value="A39680"/>
</dbReference>
<dbReference type="RefSeq" id="NP_001284491.1">
    <molecule id="P23510-2"/>
    <property type="nucleotide sequence ID" value="NM_001297562.2"/>
</dbReference>
<dbReference type="RefSeq" id="NP_003317.1">
    <molecule id="P23510-1"/>
    <property type="nucleotide sequence ID" value="NM_003326.5"/>
</dbReference>
<dbReference type="PDB" id="2HEV">
    <property type="method" value="X-ray"/>
    <property type="resolution" value="2.41 A"/>
    <property type="chains" value="F=51-183"/>
</dbReference>
<dbReference type="PDBsum" id="2HEV"/>
<dbReference type="SMR" id="P23510"/>
<dbReference type="DIP" id="DIP-3023N"/>
<dbReference type="FunCoup" id="P23510">
    <property type="interactions" value="354"/>
</dbReference>
<dbReference type="IntAct" id="P23510">
    <property type="interactions" value="3"/>
</dbReference>
<dbReference type="MINT" id="P23510"/>
<dbReference type="STRING" id="9606.ENSP00000281834"/>
<dbReference type="ChEMBL" id="CHEMBL3712900"/>
<dbReference type="GlyCosmos" id="P23510">
    <property type="glycosylation" value="4 sites, No reported glycans"/>
</dbReference>
<dbReference type="GlyGen" id="P23510">
    <property type="glycosylation" value="4 sites"/>
</dbReference>
<dbReference type="iPTMnet" id="P23510"/>
<dbReference type="PhosphoSitePlus" id="P23510"/>
<dbReference type="BioMuta" id="TNFSF4"/>
<dbReference type="DMDM" id="121540"/>
<dbReference type="jPOST" id="P23510"/>
<dbReference type="MassIVE" id="P23510"/>
<dbReference type="PaxDb" id="9606-ENSP00000281834"/>
<dbReference type="PeptideAtlas" id="P23510"/>
<dbReference type="ProteomicsDB" id="54122">
    <molecule id="P23510-1"/>
</dbReference>
<dbReference type="ProteomicsDB" id="70669"/>
<dbReference type="ABCD" id="P23510">
    <property type="antibodies" value="50 sequenced antibodies"/>
</dbReference>
<dbReference type="Antibodypedia" id="34389">
    <property type="antibodies" value="757 antibodies from 41 providers"/>
</dbReference>
<dbReference type="DNASU" id="7292"/>
<dbReference type="Ensembl" id="ENST00000281834.4">
    <molecule id="P23510-1"/>
    <property type="protein sequence ID" value="ENSP00000281834.3"/>
    <property type="gene ID" value="ENSG00000117586.12"/>
</dbReference>
<dbReference type="Ensembl" id="ENST00000367718.5">
    <molecule id="P23510-2"/>
    <property type="protein sequence ID" value="ENSP00000356691.1"/>
    <property type="gene ID" value="ENSG00000117586.12"/>
</dbReference>
<dbReference type="Ensembl" id="ENST00000714430.1">
    <molecule id="P23510-1"/>
    <property type="protein sequence ID" value="ENSP00000519699.1"/>
    <property type="gene ID" value="ENSG00000117586.12"/>
</dbReference>
<dbReference type="Ensembl" id="ENST00000714470.1">
    <molecule id="P23510-1"/>
    <property type="protein sequence ID" value="ENSP00000519727.1"/>
    <property type="gene ID" value="ENSG00000117586.12"/>
</dbReference>
<dbReference type="Ensembl" id="ENST00000714471.1">
    <molecule id="P23510-1"/>
    <property type="protein sequence ID" value="ENSP00000519728.1"/>
    <property type="gene ID" value="ENSG00000117586.12"/>
</dbReference>
<dbReference type="GeneID" id="7292"/>
<dbReference type="KEGG" id="hsa:7292"/>
<dbReference type="MANE-Select" id="ENST00000281834.4">
    <property type="protein sequence ID" value="ENSP00000281834.3"/>
    <property type="RefSeq nucleotide sequence ID" value="NM_003326.5"/>
    <property type="RefSeq protein sequence ID" value="NP_003317.1"/>
</dbReference>
<dbReference type="UCSC" id="uc001giv.4">
    <molecule id="P23510-1"/>
    <property type="organism name" value="human"/>
</dbReference>
<dbReference type="AGR" id="HGNC:11934"/>
<dbReference type="CTD" id="7292"/>
<dbReference type="DisGeNET" id="7292"/>
<dbReference type="GeneCards" id="TNFSF4"/>
<dbReference type="HGNC" id="HGNC:11934">
    <property type="gene designation" value="TNFSF4"/>
</dbReference>
<dbReference type="HPA" id="ENSG00000117586">
    <property type="expression patterns" value="Low tissue specificity"/>
</dbReference>
<dbReference type="MalaCards" id="TNFSF4"/>
<dbReference type="MIM" id="152700">
    <property type="type" value="phenotype"/>
</dbReference>
<dbReference type="MIM" id="603594">
    <property type="type" value="gene"/>
</dbReference>
<dbReference type="neXtProt" id="NX_P23510"/>
<dbReference type="OpenTargets" id="ENSG00000117586"/>
<dbReference type="Orphanet" id="2073">
    <property type="disease" value="Narcolepsy type 1"/>
</dbReference>
<dbReference type="Orphanet" id="536">
    <property type="disease" value="Systemic lupus erythematosus"/>
</dbReference>
<dbReference type="PharmGKB" id="PA36625"/>
<dbReference type="VEuPathDB" id="HostDB:ENSG00000117586"/>
<dbReference type="eggNOG" id="ENOG502ST4X">
    <property type="taxonomic scope" value="Eukaryota"/>
</dbReference>
<dbReference type="GeneTree" id="ENSGT00390000015127"/>
<dbReference type="HOGENOM" id="CLU_091735_0_0_1"/>
<dbReference type="InParanoid" id="P23510"/>
<dbReference type="OMA" id="TTHNTSC"/>
<dbReference type="OrthoDB" id="9424588at2759"/>
<dbReference type="PAN-GO" id="P23510">
    <property type="GO annotations" value="5 GO annotations based on evolutionary models"/>
</dbReference>
<dbReference type="PhylomeDB" id="P23510"/>
<dbReference type="TreeFam" id="TF336384"/>
<dbReference type="PathwayCommons" id="P23510"/>
<dbReference type="Reactome" id="R-HSA-5669034">
    <property type="pathway name" value="TNFs bind their physiological receptors"/>
</dbReference>
<dbReference type="SignaLink" id="P23510"/>
<dbReference type="SIGNOR" id="P23510"/>
<dbReference type="BioGRID-ORCS" id="7292">
    <property type="hits" value="9 hits in 1148 CRISPR screens"/>
</dbReference>
<dbReference type="ChiTaRS" id="TNFSF4">
    <property type="organism name" value="human"/>
</dbReference>
<dbReference type="EvolutionaryTrace" id="P23510"/>
<dbReference type="GenomeRNAi" id="7292"/>
<dbReference type="Pharos" id="P23510">
    <property type="development level" value="Tbio"/>
</dbReference>
<dbReference type="PRO" id="PR:P23510"/>
<dbReference type="Proteomes" id="UP000005640">
    <property type="component" value="Chromosome 1"/>
</dbReference>
<dbReference type="RNAct" id="P23510">
    <property type="molecule type" value="protein"/>
</dbReference>
<dbReference type="Bgee" id="ENSG00000117586">
    <property type="expression patterns" value="Expressed in primordial germ cell in gonad and 116 other cell types or tissues"/>
</dbReference>
<dbReference type="ExpressionAtlas" id="P23510">
    <property type="expression patterns" value="baseline and differential"/>
</dbReference>
<dbReference type="GO" id="GO:0009986">
    <property type="term" value="C:cell surface"/>
    <property type="evidence" value="ECO:0000314"/>
    <property type="project" value="BHF-UCL"/>
</dbReference>
<dbReference type="GO" id="GO:0005615">
    <property type="term" value="C:extracellular space"/>
    <property type="evidence" value="ECO:0000314"/>
    <property type="project" value="BHF-UCL"/>
</dbReference>
<dbReference type="GO" id="GO:0005886">
    <property type="term" value="C:plasma membrane"/>
    <property type="evidence" value="ECO:0000304"/>
    <property type="project" value="Reactome"/>
</dbReference>
<dbReference type="GO" id="GO:0005125">
    <property type="term" value="F:cytokine activity"/>
    <property type="evidence" value="ECO:0007669"/>
    <property type="project" value="UniProtKB-KW"/>
</dbReference>
<dbReference type="GO" id="GO:0005102">
    <property type="term" value="F:signaling receptor binding"/>
    <property type="evidence" value="ECO:0000304"/>
    <property type="project" value="ProtInc"/>
</dbReference>
<dbReference type="GO" id="GO:0005164">
    <property type="term" value="F:tumor necrosis factor receptor binding"/>
    <property type="evidence" value="ECO:0007669"/>
    <property type="project" value="InterPro"/>
</dbReference>
<dbReference type="GO" id="GO:0032813">
    <property type="term" value="F:tumor necrosis factor receptor superfamily binding"/>
    <property type="evidence" value="ECO:0000250"/>
    <property type="project" value="BHF-UCL"/>
</dbReference>
<dbReference type="GO" id="GO:0002526">
    <property type="term" value="P:acute inflammatory response"/>
    <property type="evidence" value="ECO:0000250"/>
    <property type="project" value="BHF-UCL"/>
</dbReference>
<dbReference type="GO" id="GO:0071222">
    <property type="term" value="P:cellular response to lipopolysaccharide"/>
    <property type="evidence" value="ECO:0000314"/>
    <property type="project" value="BHF-UCL"/>
</dbReference>
<dbReference type="GO" id="GO:0071380">
    <property type="term" value="P:cellular response to prostaglandin E stimulus"/>
    <property type="evidence" value="ECO:0000314"/>
    <property type="project" value="BHF-UCL"/>
</dbReference>
<dbReference type="GO" id="GO:0002215">
    <property type="term" value="P:defense response to nematode"/>
    <property type="evidence" value="ECO:0000250"/>
    <property type="project" value="BHF-UCL"/>
</dbReference>
<dbReference type="GO" id="GO:0006955">
    <property type="term" value="P:immune response"/>
    <property type="evidence" value="ECO:0007669"/>
    <property type="project" value="InterPro"/>
</dbReference>
<dbReference type="GO" id="GO:0006954">
    <property type="term" value="P:inflammatory response"/>
    <property type="evidence" value="ECO:0000318"/>
    <property type="project" value="GO_Central"/>
</dbReference>
<dbReference type="GO" id="GO:0035709">
    <property type="term" value="P:memory T cell activation"/>
    <property type="evidence" value="ECO:0000250"/>
    <property type="project" value="BHF-UCL"/>
</dbReference>
<dbReference type="GO" id="GO:0043433">
    <property type="term" value="P:negative regulation of DNA-binding transcription factor activity"/>
    <property type="evidence" value="ECO:0000250"/>
    <property type="project" value="BHF-UCL"/>
</dbReference>
<dbReference type="GO" id="GO:0045892">
    <property type="term" value="P:negative regulation of DNA-templated transcription"/>
    <property type="evidence" value="ECO:0000250"/>
    <property type="project" value="BHF-UCL"/>
</dbReference>
<dbReference type="GO" id="GO:0032700">
    <property type="term" value="P:negative regulation of interleukin-17 production"/>
    <property type="evidence" value="ECO:0000314"/>
    <property type="project" value="BHF-UCL"/>
</dbReference>
<dbReference type="GO" id="GO:0045590">
    <property type="term" value="P:negative regulation of regulatory T cell differentiation"/>
    <property type="evidence" value="ECO:0000250"/>
    <property type="project" value="BHF-UCL"/>
</dbReference>
<dbReference type="GO" id="GO:0045626">
    <property type="term" value="P:negative regulation of T-helper 1 cell differentiation"/>
    <property type="evidence" value="ECO:0000250"/>
    <property type="project" value="BHF-UCL"/>
</dbReference>
<dbReference type="GO" id="GO:0032689">
    <property type="term" value="P:negative regulation of type II interferon production"/>
    <property type="evidence" value="ECO:0000250"/>
    <property type="project" value="BHF-UCL"/>
</dbReference>
<dbReference type="GO" id="GO:0046641">
    <property type="term" value="P:positive regulation of alpha-beta T cell proliferation"/>
    <property type="evidence" value="ECO:0000250"/>
    <property type="project" value="BHF-UCL"/>
</dbReference>
<dbReference type="GO" id="GO:0050871">
    <property type="term" value="P:positive regulation of B cell activation"/>
    <property type="evidence" value="ECO:0000250"/>
    <property type="project" value="BHF-UCL"/>
</dbReference>
<dbReference type="GO" id="GO:1900281">
    <property type="term" value="P:positive regulation of CD4-positive, alpha-beta T cell costimulation"/>
    <property type="evidence" value="ECO:0000250"/>
    <property type="project" value="BHF-UCL"/>
</dbReference>
<dbReference type="GO" id="GO:0043372">
    <property type="term" value="P:positive regulation of CD4-positive, alpha-beta T cell differentiation"/>
    <property type="evidence" value="ECO:0000250"/>
    <property type="project" value="BHF-UCL"/>
</dbReference>
<dbReference type="GO" id="GO:0008284">
    <property type="term" value="P:positive regulation of cell population proliferation"/>
    <property type="evidence" value="ECO:0000304"/>
    <property type="project" value="ProtInc"/>
</dbReference>
<dbReference type="GO" id="GO:0032722">
    <property type="term" value="P:positive regulation of chemokine production"/>
    <property type="evidence" value="ECO:0000250"/>
    <property type="project" value="BHF-UCL"/>
</dbReference>
<dbReference type="GO" id="GO:0001819">
    <property type="term" value="P:positive regulation of cytokine production"/>
    <property type="evidence" value="ECO:0000318"/>
    <property type="project" value="GO_Central"/>
</dbReference>
<dbReference type="GO" id="GO:0002891">
    <property type="term" value="P:positive regulation of immunoglobulin mediated immune response"/>
    <property type="evidence" value="ECO:0000250"/>
    <property type="project" value="BHF-UCL"/>
</dbReference>
<dbReference type="GO" id="GO:0002639">
    <property type="term" value="P:positive regulation of immunoglobulin production"/>
    <property type="evidence" value="ECO:0000250"/>
    <property type="project" value="BHF-UCL"/>
</dbReference>
<dbReference type="GO" id="GO:0050729">
    <property type="term" value="P:positive regulation of inflammatory response"/>
    <property type="evidence" value="ECO:0000314"/>
    <property type="project" value="BHF-UCL"/>
</dbReference>
<dbReference type="GO" id="GO:0032733">
    <property type="term" value="P:positive regulation of interleukin-10 production"/>
    <property type="evidence" value="ECO:0000250"/>
    <property type="project" value="BHF-UCL"/>
</dbReference>
<dbReference type="GO" id="GO:0032735">
    <property type="term" value="P:positive regulation of interleukin-12 production"/>
    <property type="evidence" value="ECO:0000250"/>
    <property type="project" value="BHF-UCL"/>
</dbReference>
<dbReference type="GO" id="GO:0032736">
    <property type="term" value="P:positive regulation of interleukin-13 production"/>
    <property type="evidence" value="ECO:0000250"/>
    <property type="project" value="BHF-UCL"/>
</dbReference>
<dbReference type="GO" id="GO:0032753">
    <property type="term" value="P:positive regulation of interleukin-4 production"/>
    <property type="evidence" value="ECO:0000314"/>
    <property type="project" value="BHF-UCL"/>
</dbReference>
<dbReference type="GO" id="GO:2000572">
    <property type="term" value="P:positive regulation of interleukin-4-dependent isotype switching to IgE isotypes"/>
    <property type="evidence" value="ECO:0000250"/>
    <property type="project" value="BHF-UCL"/>
</dbReference>
<dbReference type="GO" id="GO:0032755">
    <property type="term" value="P:positive regulation of interleukin-6 production"/>
    <property type="evidence" value="ECO:0000314"/>
    <property type="project" value="BHF-UCL"/>
</dbReference>
<dbReference type="GO" id="GO:0043382">
    <property type="term" value="P:positive regulation of memory T cell differentiation"/>
    <property type="evidence" value="ECO:0000250"/>
    <property type="project" value="BHF-UCL"/>
</dbReference>
<dbReference type="GO" id="GO:0002726">
    <property type="term" value="P:positive regulation of T cell cytokine production"/>
    <property type="evidence" value="ECO:0000250"/>
    <property type="project" value="BHF-UCL"/>
</dbReference>
<dbReference type="GO" id="GO:0042102">
    <property type="term" value="P:positive regulation of T cell proliferation"/>
    <property type="evidence" value="ECO:0000318"/>
    <property type="project" value="GO_Central"/>
</dbReference>
<dbReference type="GO" id="GO:0045630">
    <property type="term" value="P:positive regulation of T-helper 2 cell differentiation"/>
    <property type="evidence" value="ECO:0000250"/>
    <property type="project" value="BHF-UCL"/>
</dbReference>
<dbReference type="GO" id="GO:0002830">
    <property type="term" value="P:positive regulation of type 2 immune response"/>
    <property type="evidence" value="ECO:0000250"/>
    <property type="project" value="BHF-UCL"/>
</dbReference>
<dbReference type="GO" id="GO:0032729">
    <property type="term" value="P:positive regulation of type II interferon production"/>
    <property type="evidence" value="ECO:0000314"/>
    <property type="project" value="BHF-UCL"/>
</dbReference>
<dbReference type="GO" id="GO:0002819">
    <property type="term" value="P:regulation of adaptive immune response"/>
    <property type="evidence" value="ECO:0000250"/>
    <property type="project" value="BHF-UCL"/>
</dbReference>
<dbReference type="GO" id="GO:0050727">
    <property type="term" value="P:regulation of inflammatory response"/>
    <property type="evidence" value="ECO:0000250"/>
    <property type="project" value="BHF-UCL"/>
</dbReference>
<dbReference type="GO" id="GO:0035713">
    <property type="term" value="P:response to nitrogen dioxide"/>
    <property type="evidence" value="ECO:0000250"/>
    <property type="project" value="BHF-UCL"/>
</dbReference>
<dbReference type="GO" id="GO:0009615">
    <property type="term" value="P:response to virus"/>
    <property type="evidence" value="ECO:0000250"/>
    <property type="project" value="BHF-UCL"/>
</dbReference>
<dbReference type="GO" id="GO:0007165">
    <property type="term" value="P:signal transduction"/>
    <property type="evidence" value="ECO:0000304"/>
    <property type="project" value="ProtInc"/>
</dbReference>
<dbReference type="GO" id="GO:0035712">
    <property type="term" value="P:T-helper 2 cell activation"/>
    <property type="evidence" value="ECO:0000250"/>
    <property type="project" value="BHF-UCL"/>
</dbReference>
<dbReference type="CDD" id="cd00184">
    <property type="entry name" value="TNF"/>
    <property type="match status" value="1"/>
</dbReference>
<dbReference type="FunFam" id="2.60.120.40:FF:000025">
    <property type="entry name" value="tumor necrosis factor ligand superfamily member 4"/>
    <property type="match status" value="1"/>
</dbReference>
<dbReference type="Gene3D" id="2.60.120.40">
    <property type="match status" value="1"/>
</dbReference>
<dbReference type="InterPro" id="IPR021184">
    <property type="entry name" value="TNF_CS"/>
</dbReference>
<dbReference type="InterPro" id="IPR006052">
    <property type="entry name" value="TNF_dom"/>
</dbReference>
<dbReference type="InterPro" id="IPR042338">
    <property type="entry name" value="TNFSF4"/>
</dbReference>
<dbReference type="InterPro" id="IPR008983">
    <property type="entry name" value="Tumour_necrosis_fac-like_dom"/>
</dbReference>
<dbReference type="PANTHER" id="PTHR17534">
    <property type="entry name" value="OX40 LIGAND"/>
    <property type="match status" value="1"/>
</dbReference>
<dbReference type="PANTHER" id="PTHR17534:SF4">
    <property type="entry name" value="TUMOR NECROSIS FACTOR LIGAND SUPERFAMILY MEMBER 4"/>
    <property type="match status" value="1"/>
</dbReference>
<dbReference type="SMART" id="SM00207">
    <property type="entry name" value="TNF"/>
    <property type="match status" value="1"/>
</dbReference>
<dbReference type="SUPFAM" id="SSF49842">
    <property type="entry name" value="TNF-like"/>
    <property type="match status" value="1"/>
</dbReference>
<dbReference type="PROSITE" id="PS00251">
    <property type="entry name" value="THD_1"/>
    <property type="match status" value="1"/>
</dbReference>
<dbReference type="PROSITE" id="PS50049">
    <property type="entry name" value="THD_2"/>
    <property type="match status" value="1"/>
</dbReference>
<feature type="chain" id="PRO_0000185493" description="Tumor necrosis factor ligand superfamily member 4">
    <location>
        <begin position="1"/>
        <end position="183"/>
    </location>
</feature>
<feature type="topological domain" description="Cytoplasmic" evidence="1">
    <location>
        <begin position="1"/>
        <end position="23"/>
    </location>
</feature>
<feature type="transmembrane region" description="Helical; Signal-anchor for type II membrane protein" evidence="1">
    <location>
        <begin position="24"/>
        <end position="50"/>
    </location>
</feature>
<feature type="topological domain" description="Extracellular" evidence="1">
    <location>
        <begin position="51"/>
        <end position="183"/>
    </location>
</feature>
<feature type="domain" description="THD" evidence="2">
    <location>
        <begin position="51"/>
        <end position="173"/>
    </location>
</feature>
<feature type="glycosylation site" description="N-linked (GlcNAc...) asparagine" evidence="1">
    <location>
        <position position="90"/>
    </location>
</feature>
<feature type="glycosylation site" description="N-linked (GlcNAc...) asparagine" evidence="1">
    <location>
        <position position="114"/>
    </location>
</feature>
<feature type="glycosylation site" description="N-linked (GlcNAc...) asparagine" evidence="3">
    <location>
        <position position="152"/>
    </location>
</feature>
<feature type="glycosylation site" description="N-linked (GlcNAc...) asparagine" evidence="1">
    <location>
        <position position="157"/>
    </location>
</feature>
<feature type="disulfide bond" evidence="3">
    <location>
        <begin position="97"/>
        <end position="181"/>
    </location>
</feature>
<feature type="splice variant" id="VSP_056288" description="In isoform 2." evidence="5 6">
    <original>MERVQPLEENVGNAARPRFERNKLLLVASVIQGLGLLLCFTYICLHFSALQ</original>
    <variation>M</variation>
    <location>
        <begin position="1"/>
        <end position="51"/>
    </location>
</feature>
<feature type="strand" evidence="8">
    <location>
        <begin position="61"/>
        <end position="70"/>
    </location>
</feature>
<feature type="turn" evidence="8">
    <location>
        <begin position="71"/>
        <end position="73"/>
    </location>
</feature>
<feature type="strand" evidence="8">
    <location>
        <begin position="74"/>
        <end position="78"/>
    </location>
</feature>
<feature type="strand" evidence="8">
    <location>
        <begin position="92"/>
        <end position="94"/>
    </location>
</feature>
<feature type="strand" evidence="8">
    <location>
        <begin position="99"/>
        <end position="120"/>
    </location>
</feature>
<feature type="strand" evidence="8">
    <location>
        <begin position="126"/>
        <end position="143"/>
    </location>
</feature>
<feature type="strand" evidence="8">
    <location>
        <begin position="148"/>
        <end position="155"/>
    </location>
</feature>
<feature type="strand" evidence="8">
    <location>
        <begin position="165"/>
        <end position="174"/>
    </location>
</feature>
<proteinExistence type="evidence at protein level"/>
<reference key="1">
    <citation type="journal article" date="1991" name="Mol. Cell. Biol.">
        <title>Molecular cloning and characterization of a novel glycoprotein, gp34, that is specifically induced by the human T-cell leukemia virus type I transactivator p40tax.</title>
        <authorList>
            <person name="Miura S."/>
            <person name="Ohtani K."/>
            <person name="Numata N."/>
            <person name="Niki M."/>
            <person name="Ohbo K."/>
            <person name="Ina Y."/>
            <person name="Gojobori T."/>
            <person name="Tanaka Y."/>
            <person name="Tozawa H."/>
            <person name="Nakamura M."/>
            <person name="Sugamura K."/>
        </authorList>
    </citation>
    <scope>NUCLEOTIDE SEQUENCE [MRNA] (ISOFORM 1)</scope>
</reference>
<reference key="2">
    <citation type="journal article" date="1994" name="J. Exp. Med.">
        <title>Identification of a human OX-40 ligand, a costimulator of CD4+ T cells with homology to tumor necrosis factor.</title>
        <authorList>
            <person name="Godfrey W.R."/>
            <person name="Fagnoni F.F."/>
            <person name="Harara M.A."/>
            <person name="Buck D."/>
            <person name="Engleman E.G."/>
        </authorList>
    </citation>
    <scope>NUCLEOTIDE SEQUENCE [MRNA] (ISOFORM 1)</scope>
</reference>
<reference key="3">
    <citation type="journal article" date="2004" name="Nat. Genet.">
        <title>Complete sequencing and characterization of 21,243 full-length human cDNAs.</title>
        <authorList>
            <person name="Ota T."/>
            <person name="Suzuki Y."/>
            <person name="Nishikawa T."/>
            <person name="Otsuki T."/>
            <person name="Sugiyama T."/>
            <person name="Irie R."/>
            <person name="Wakamatsu A."/>
            <person name="Hayashi K."/>
            <person name="Sato H."/>
            <person name="Nagai K."/>
            <person name="Kimura K."/>
            <person name="Makita H."/>
            <person name="Sekine M."/>
            <person name="Obayashi M."/>
            <person name="Nishi T."/>
            <person name="Shibahara T."/>
            <person name="Tanaka T."/>
            <person name="Ishii S."/>
            <person name="Yamamoto J."/>
            <person name="Saito K."/>
            <person name="Kawai Y."/>
            <person name="Isono Y."/>
            <person name="Nakamura Y."/>
            <person name="Nagahari K."/>
            <person name="Murakami K."/>
            <person name="Yasuda T."/>
            <person name="Iwayanagi T."/>
            <person name="Wagatsuma M."/>
            <person name="Shiratori A."/>
            <person name="Sudo H."/>
            <person name="Hosoiri T."/>
            <person name="Kaku Y."/>
            <person name="Kodaira H."/>
            <person name="Kondo H."/>
            <person name="Sugawara M."/>
            <person name="Takahashi M."/>
            <person name="Kanda K."/>
            <person name="Yokoi T."/>
            <person name="Furuya T."/>
            <person name="Kikkawa E."/>
            <person name="Omura Y."/>
            <person name="Abe K."/>
            <person name="Kamihara K."/>
            <person name="Katsuta N."/>
            <person name="Sato K."/>
            <person name="Tanikawa M."/>
            <person name="Yamazaki M."/>
            <person name="Ninomiya K."/>
            <person name="Ishibashi T."/>
            <person name="Yamashita H."/>
            <person name="Murakawa K."/>
            <person name="Fujimori K."/>
            <person name="Tanai H."/>
            <person name="Kimata M."/>
            <person name="Watanabe M."/>
            <person name="Hiraoka S."/>
            <person name="Chiba Y."/>
            <person name="Ishida S."/>
            <person name="Ono Y."/>
            <person name="Takiguchi S."/>
            <person name="Watanabe S."/>
            <person name="Yosida M."/>
            <person name="Hotuta T."/>
            <person name="Kusano J."/>
            <person name="Kanehori K."/>
            <person name="Takahashi-Fujii A."/>
            <person name="Hara H."/>
            <person name="Tanase T.-O."/>
            <person name="Nomura Y."/>
            <person name="Togiya S."/>
            <person name="Komai F."/>
            <person name="Hara R."/>
            <person name="Takeuchi K."/>
            <person name="Arita M."/>
            <person name="Imose N."/>
            <person name="Musashino K."/>
            <person name="Yuuki H."/>
            <person name="Oshima A."/>
            <person name="Sasaki N."/>
            <person name="Aotsuka S."/>
            <person name="Yoshikawa Y."/>
            <person name="Matsunawa H."/>
            <person name="Ichihara T."/>
            <person name="Shiohata N."/>
            <person name="Sano S."/>
            <person name="Moriya S."/>
            <person name="Momiyama H."/>
            <person name="Satoh N."/>
            <person name="Takami S."/>
            <person name="Terashima Y."/>
            <person name="Suzuki O."/>
            <person name="Nakagawa S."/>
            <person name="Senoh A."/>
            <person name="Mizoguchi H."/>
            <person name="Goto Y."/>
            <person name="Shimizu F."/>
            <person name="Wakebe H."/>
            <person name="Hishigaki H."/>
            <person name="Watanabe T."/>
            <person name="Sugiyama A."/>
            <person name="Takemoto M."/>
            <person name="Kawakami B."/>
            <person name="Yamazaki M."/>
            <person name="Watanabe K."/>
            <person name="Kumagai A."/>
            <person name="Itakura S."/>
            <person name="Fukuzumi Y."/>
            <person name="Fujimori Y."/>
            <person name="Komiyama M."/>
            <person name="Tashiro H."/>
            <person name="Tanigami A."/>
            <person name="Fujiwara T."/>
            <person name="Ono T."/>
            <person name="Yamada K."/>
            <person name="Fujii Y."/>
            <person name="Ozaki K."/>
            <person name="Hirao M."/>
            <person name="Ohmori Y."/>
            <person name="Kawabata A."/>
            <person name="Hikiji T."/>
            <person name="Kobatake N."/>
            <person name="Inagaki H."/>
            <person name="Ikema Y."/>
            <person name="Okamoto S."/>
            <person name="Okitani R."/>
            <person name="Kawakami T."/>
            <person name="Noguchi S."/>
            <person name="Itoh T."/>
            <person name="Shigeta K."/>
            <person name="Senba T."/>
            <person name="Matsumura K."/>
            <person name="Nakajima Y."/>
            <person name="Mizuno T."/>
            <person name="Morinaga M."/>
            <person name="Sasaki M."/>
            <person name="Togashi T."/>
            <person name="Oyama M."/>
            <person name="Hata H."/>
            <person name="Watanabe M."/>
            <person name="Komatsu T."/>
            <person name="Mizushima-Sugano J."/>
            <person name="Satoh T."/>
            <person name="Shirai Y."/>
            <person name="Takahashi Y."/>
            <person name="Nakagawa K."/>
            <person name="Okumura K."/>
            <person name="Nagase T."/>
            <person name="Nomura N."/>
            <person name="Kikuchi H."/>
            <person name="Masuho Y."/>
            <person name="Yamashita R."/>
            <person name="Nakai K."/>
            <person name="Yada T."/>
            <person name="Nakamura Y."/>
            <person name="Ohara O."/>
            <person name="Isogai T."/>
            <person name="Sugano S."/>
        </authorList>
    </citation>
    <scope>NUCLEOTIDE SEQUENCE [LARGE SCALE MRNA] (ISOFORM 2)</scope>
</reference>
<reference key="4">
    <citation type="journal article" date="2006" name="Nature">
        <title>The DNA sequence and biological annotation of human chromosome 1.</title>
        <authorList>
            <person name="Gregory S.G."/>
            <person name="Barlow K.F."/>
            <person name="McLay K.E."/>
            <person name="Kaul R."/>
            <person name="Swarbreck D."/>
            <person name="Dunham A."/>
            <person name="Scott C.E."/>
            <person name="Howe K.L."/>
            <person name="Woodfine K."/>
            <person name="Spencer C.C.A."/>
            <person name="Jones M.C."/>
            <person name="Gillson C."/>
            <person name="Searle S."/>
            <person name="Zhou Y."/>
            <person name="Kokocinski F."/>
            <person name="McDonald L."/>
            <person name="Evans R."/>
            <person name="Phillips K."/>
            <person name="Atkinson A."/>
            <person name="Cooper R."/>
            <person name="Jones C."/>
            <person name="Hall R.E."/>
            <person name="Andrews T.D."/>
            <person name="Lloyd C."/>
            <person name="Ainscough R."/>
            <person name="Almeida J.P."/>
            <person name="Ambrose K.D."/>
            <person name="Anderson F."/>
            <person name="Andrew R.W."/>
            <person name="Ashwell R.I.S."/>
            <person name="Aubin K."/>
            <person name="Babbage A.K."/>
            <person name="Bagguley C.L."/>
            <person name="Bailey J."/>
            <person name="Beasley H."/>
            <person name="Bethel G."/>
            <person name="Bird C.P."/>
            <person name="Bray-Allen S."/>
            <person name="Brown J.Y."/>
            <person name="Brown A.J."/>
            <person name="Buckley D."/>
            <person name="Burton J."/>
            <person name="Bye J."/>
            <person name="Carder C."/>
            <person name="Chapman J.C."/>
            <person name="Clark S.Y."/>
            <person name="Clarke G."/>
            <person name="Clee C."/>
            <person name="Cobley V."/>
            <person name="Collier R.E."/>
            <person name="Corby N."/>
            <person name="Coville G.J."/>
            <person name="Davies J."/>
            <person name="Deadman R."/>
            <person name="Dunn M."/>
            <person name="Earthrowl M."/>
            <person name="Ellington A.G."/>
            <person name="Errington H."/>
            <person name="Frankish A."/>
            <person name="Frankland J."/>
            <person name="French L."/>
            <person name="Garner P."/>
            <person name="Garnett J."/>
            <person name="Gay L."/>
            <person name="Ghori M.R.J."/>
            <person name="Gibson R."/>
            <person name="Gilby L.M."/>
            <person name="Gillett W."/>
            <person name="Glithero R.J."/>
            <person name="Grafham D.V."/>
            <person name="Griffiths C."/>
            <person name="Griffiths-Jones S."/>
            <person name="Grocock R."/>
            <person name="Hammond S."/>
            <person name="Harrison E.S.I."/>
            <person name="Hart E."/>
            <person name="Haugen E."/>
            <person name="Heath P.D."/>
            <person name="Holmes S."/>
            <person name="Holt K."/>
            <person name="Howden P.J."/>
            <person name="Hunt A.R."/>
            <person name="Hunt S.E."/>
            <person name="Hunter G."/>
            <person name="Isherwood J."/>
            <person name="James R."/>
            <person name="Johnson C."/>
            <person name="Johnson D."/>
            <person name="Joy A."/>
            <person name="Kay M."/>
            <person name="Kershaw J.K."/>
            <person name="Kibukawa M."/>
            <person name="Kimberley A.M."/>
            <person name="King A."/>
            <person name="Knights A.J."/>
            <person name="Lad H."/>
            <person name="Laird G."/>
            <person name="Lawlor S."/>
            <person name="Leongamornlert D.A."/>
            <person name="Lloyd D.M."/>
            <person name="Loveland J."/>
            <person name="Lovell J."/>
            <person name="Lush M.J."/>
            <person name="Lyne R."/>
            <person name="Martin S."/>
            <person name="Mashreghi-Mohammadi M."/>
            <person name="Matthews L."/>
            <person name="Matthews N.S.W."/>
            <person name="McLaren S."/>
            <person name="Milne S."/>
            <person name="Mistry S."/>
            <person name="Moore M.J.F."/>
            <person name="Nickerson T."/>
            <person name="O'Dell C.N."/>
            <person name="Oliver K."/>
            <person name="Palmeiri A."/>
            <person name="Palmer S.A."/>
            <person name="Parker A."/>
            <person name="Patel D."/>
            <person name="Pearce A.V."/>
            <person name="Peck A.I."/>
            <person name="Pelan S."/>
            <person name="Phelps K."/>
            <person name="Phillimore B.J."/>
            <person name="Plumb R."/>
            <person name="Rajan J."/>
            <person name="Raymond C."/>
            <person name="Rouse G."/>
            <person name="Saenphimmachak C."/>
            <person name="Sehra H.K."/>
            <person name="Sheridan E."/>
            <person name="Shownkeen R."/>
            <person name="Sims S."/>
            <person name="Skuce C.D."/>
            <person name="Smith M."/>
            <person name="Steward C."/>
            <person name="Subramanian S."/>
            <person name="Sycamore N."/>
            <person name="Tracey A."/>
            <person name="Tromans A."/>
            <person name="Van Helmond Z."/>
            <person name="Wall M."/>
            <person name="Wallis J.M."/>
            <person name="White S."/>
            <person name="Whitehead S.L."/>
            <person name="Wilkinson J.E."/>
            <person name="Willey D.L."/>
            <person name="Williams H."/>
            <person name="Wilming L."/>
            <person name="Wray P.W."/>
            <person name="Wu Z."/>
            <person name="Coulson A."/>
            <person name="Vaudin M."/>
            <person name="Sulston J.E."/>
            <person name="Durbin R.M."/>
            <person name="Hubbard T."/>
            <person name="Wooster R."/>
            <person name="Dunham I."/>
            <person name="Carter N.P."/>
            <person name="McVean G."/>
            <person name="Ross M.T."/>
            <person name="Harrow J."/>
            <person name="Olson M.V."/>
            <person name="Beck S."/>
            <person name="Rogers J."/>
            <person name="Bentley D.R."/>
        </authorList>
    </citation>
    <scope>NUCLEOTIDE SEQUENCE [LARGE SCALE GENOMIC DNA]</scope>
</reference>
<reference key="5">
    <citation type="submission" date="2005-07" db="EMBL/GenBank/DDBJ databases">
        <authorList>
            <person name="Mural R.J."/>
            <person name="Istrail S."/>
            <person name="Sutton G.G."/>
            <person name="Florea L."/>
            <person name="Halpern A.L."/>
            <person name="Mobarry C.M."/>
            <person name="Lippert R."/>
            <person name="Walenz B."/>
            <person name="Shatkay H."/>
            <person name="Dew I."/>
            <person name="Miller J.R."/>
            <person name="Flanigan M.J."/>
            <person name="Edwards N.J."/>
            <person name="Bolanos R."/>
            <person name="Fasulo D."/>
            <person name="Halldorsson B.V."/>
            <person name="Hannenhalli S."/>
            <person name="Turner R."/>
            <person name="Yooseph S."/>
            <person name="Lu F."/>
            <person name="Nusskern D.R."/>
            <person name="Shue B.C."/>
            <person name="Zheng X.H."/>
            <person name="Zhong F."/>
            <person name="Delcher A.L."/>
            <person name="Huson D.H."/>
            <person name="Kravitz S.A."/>
            <person name="Mouchard L."/>
            <person name="Reinert K."/>
            <person name="Remington K.A."/>
            <person name="Clark A.G."/>
            <person name="Waterman M.S."/>
            <person name="Eichler E.E."/>
            <person name="Adams M.D."/>
            <person name="Hunkapiller M.W."/>
            <person name="Myers E.W."/>
            <person name="Venter J.C."/>
        </authorList>
    </citation>
    <scope>NUCLEOTIDE SEQUENCE [LARGE SCALE GENOMIC DNA]</scope>
</reference>
<reference key="6">
    <citation type="journal article" date="2004" name="Genome Res.">
        <title>The status, quality, and expansion of the NIH full-length cDNA project: the Mammalian Gene Collection (MGC).</title>
        <authorList>
            <consortium name="The MGC Project Team"/>
        </authorList>
    </citation>
    <scope>NUCLEOTIDE SEQUENCE [LARGE SCALE MRNA] (ISOFORM 2)</scope>
    <source>
        <tissue>Testis</tissue>
    </source>
</reference>
<reference key="7">
    <citation type="journal article" date="2000" name="Genes Immun.">
        <title>New variations in human OX40 ligand (CD134L) gene.</title>
        <authorList>
            <person name="Hikami K."/>
            <person name="Tsuchiya N."/>
            <person name="Tokunaga K."/>
        </authorList>
    </citation>
    <scope>NUCLEOTIDE SEQUENCE [GENOMIC DNA] OF 1-67</scope>
</reference>
<reference key="8">
    <citation type="journal article" date="1994" name="EMBO J.">
        <title>Molecular characterization of murine and human OX40/OX40 ligand systems: identification of a human OX40 ligand as the HTLV-1-regulated protein gp34.</title>
        <authorList>
            <person name="Baum P.R."/>
            <person name="Gayle R.B. III"/>
            <person name="Ramsdell F."/>
            <person name="Srinivasan S."/>
            <person name="Sorensen R.A."/>
            <person name="Watson M.L."/>
            <person name="Seldin M.F."/>
            <person name="Baker E."/>
            <person name="Sutherland G.R."/>
            <person name="Clifford K.N."/>
            <person name="Alderson M.R."/>
            <person name="Goodwin R.G."/>
            <person name="Fanslow W.C."/>
        </authorList>
    </citation>
    <scope>CHARACTERIZATION</scope>
</reference>
<reference key="9">
    <citation type="journal article" date="2008" name="Nat. Genet.">
        <title>Polymorphism at the TNF superfamily gene TNFSF4 confers susceptibility to systemic lupus erythematosus.</title>
        <authorList>
            <person name="Cunninghame Graham D.S."/>
            <person name="Graham R.R."/>
            <person name="Manku H."/>
            <person name="Wong A.K."/>
            <person name="Whittaker J.C."/>
            <person name="Gaffney P.M."/>
            <person name="Moser K.L."/>
            <person name="Rioux J.D."/>
            <person name="Altshuler D."/>
            <person name="Behrens T.W."/>
            <person name="Vyse T.J."/>
        </authorList>
    </citation>
    <scope>INVOLVEMENT IN SUSCEPTIBILITY TO SLE</scope>
</reference>
<reference key="10">
    <citation type="journal article" date="2006" name="Structure">
        <title>The crystal structure of the costimulatory OX40-OX40L complex.</title>
        <authorList>
            <person name="Compaan D.M."/>
            <person name="Hymowitz S.G."/>
        </authorList>
    </citation>
    <scope>X-RAY CRYSTALLOGRAPHY (2.41 ANGSTROMS) OF 48-183 IN COMPLEX WITH TNFRSF4</scope>
    <scope>SUBUNIT</scope>
    <scope>DISULFIDE BOND</scope>
    <scope>GLYCOSYLATION AT ASN-152</scope>
</reference>
<evidence type="ECO:0000255" key="1"/>
<evidence type="ECO:0000255" key="2">
    <source>
        <dbReference type="PROSITE-ProRule" id="PRU01387"/>
    </source>
</evidence>
<evidence type="ECO:0000269" key="3">
    <source>
    </source>
</evidence>
<evidence type="ECO:0000269" key="4">
    <source>
    </source>
</evidence>
<evidence type="ECO:0000303" key="5">
    <source>
    </source>
</evidence>
<evidence type="ECO:0000303" key="6">
    <source>
    </source>
</evidence>
<evidence type="ECO:0000305" key="7"/>
<evidence type="ECO:0007829" key="8">
    <source>
        <dbReference type="PDB" id="2HEV"/>
    </source>
</evidence>
<organism>
    <name type="scientific">Homo sapiens</name>
    <name type="common">Human</name>
    <dbReference type="NCBI Taxonomy" id="9606"/>
    <lineage>
        <taxon>Eukaryota</taxon>
        <taxon>Metazoa</taxon>
        <taxon>Chordata</taxon>
        <taxon>Craniata</taxon>
        <taxon>Vertebrata</taxon>
        <taxon>Euteleostomi</taxon>
        <taxon>Mammalia</taxon>
        <taxon>Eutheria</taxon>
        <taxon>Euarchontoglires</taxon>
        <taxon>Primates</taxon>
        <taxon>Haplorrhini</taxon>
        <taxon>Catarrhini</taxon>
        <taxon>Hominidae</taxon>
        <taxon>Homo</taxon>
    </lineage>
</organism>
<sequence length="183" mass="21050">MERVQPLEENVGNAARPRFERNKLLLVASVIQGLGLLLCFTYICLHFSALQVSHRYPRIQSIKVQFTEYKKEKGFILTSQKEDEIMKVQNNSVIINCDGFYLISLKGYFSQEVNISLHYQKDEEPLFQLKKVRSVNSLMVASLTYKDKVYLNVTTDNTSLDDFHVNGGELILIHQNPGEFCVL</sequence>
<keyword id="KW-0002">3D-structure</keyword>
<keyword id="KW-0025">Alternative splicing</keyword>
<keyword id="KW-0202">Cytokine</keyword>
<keyword id="KW-1015">Disulfide bond</keyword>
<keyword id="KW-0325">Glycoprotein</keyword>
<keyword id="KW-0472">Membrane</keyword>
<keyword id="KW-1267">Proteomics identification</keyword>
<keyword id="KW-1185">Reference proteome</keyword>
<keyword id="KW-0735">Signal-anchor</keyword>
<keyword id="KW-0772">Systemic lupus erythematosus</keyword>
<keyword id="KW-0812">Transmembrane</keyword>
<keyword id="KW-1133">Transmembrane helix</keyword>
<name>TNFL4_HUMAN</name>
<gene>
    <name type="primary">TNFSF4</name>
    <name type="synonym">TXGP1</name>
</gene>
<comment type="function">
    <text>Cytokine that binds to TNFRSF4. Co-stimulates T-cell proliferation and cytokine production.</text>
</comment>
<comment type="subunit">
    <text evidence="3">Homotrimer.</text>
</comment>
<comment type="interaction">
    <interactant intactId="EBI-11724451">
        <id>P23510</id>
    </interactant>
    <interactant intactId="EBI-15596193">
        <id>P43489</id>
        <label>TNFRSF4</label>
    </interactant>
    <organismsDiffer>false</organismsDiffer>
    <experiments>2</experiments>
</comment>
<comment type="interaction">
    <interactant intactId="EBI-11724451">
        <id>P23510</id>
    </interactant>
    <interactant intactId="EBI-519690">
        <id>P43488</id>
        <label>Tnfsf4</label>
    </interactant>
    <organismsDiffer>true</organismsDiffer>
    <experiments>2</experiments>
</comment>
<comment type="subcellular location">
    <subcellularLocation>
        <location>Membrane</location>
        <topology>Single-pass type II membrane protein</topology>
    </subcellularLocation>
</comment>
<comment type="alternative products">
    <event type="alternative splicing"/>
    <isoform>
        <id>P23510-1</id>
        <name>1</name>
        <sequence type="displayed"/>
    </isoform>
    <isoform>
        <id>P23510-2</id>
        <name>2</name>
        <sequence type="described" ref="VSP_056288"/>
    </isoform>
</comment>
<comment type="induction">
    <text>By HTLV-1 transactivator p40-Tax.</text>
</comment>
<comment type="disease" evidence="4">
    <disease id="DI-02648">
        <name>Systemic lupus erythematosus</name>
        <acronym>SLE</acronym>
        <description>A chronic, relapsing, inflammatory, and often febrile multisystemic disorder of connective tissue, characterized principally by involvement of the skin, joints, kidneys and serosal membranes. It is of unknown etiology, but is thought to represent a failure of the regulatory mechanisms of the autoimmune system. The disease is marked by a wide range of system dysfunctions, an elevated erythrocyte sedimentation rate, and the formation of LE cells in the blood or bone marrow.</description>
        <dbReference type="MIM" id="152700"/>
    </disease>
    <text>Disease susceptibility is associated with variants affecting the gene represented in this entry. The upstream region of TNFSF4 contains a single risk haplotype for SLE, which is correlated with increased expression of both cell-surface TNFSF4 and TNFSF4 transcripts. Increased levels of TNFSF4 are thought to augment T-cell-APC interaction and the functional consequences of T-cell activation, thereby destabilizing peripheral tolerance.</text>
</comment>
<comment type="similarity">
    <text evidence="7">Belongs to the tumor necrosis factor family.</text>
</comment>